<organism>
    <name type="scientific">Ruminiclostridium cellulolyticum (strain ATCC 35319 / DSM 5812 / JCM 6584 / H10)</name>
    <name type="common">Clostridium cellulolyticum</name>
    <dbReference type="NCBI Taxonomy" id="394503"/>
    <lineage>
        <taxon>Bacteria</taxon>
        <taxon>Bacillati</taxon>
        <taxon>Bacillota</taxon>
        <taxon>Clostridia</taxon>
        <taxon>Eubacteriales</taxon>
        <taxon>Oscillospiraceae</taxon>
        <taxon>Ruminiclostridium</taxon>
    </lineage>
</organism>
<feature type="chain" id="PRO_1000147615" description="Phosphatidylserine decarboxylase beta chain" evidence="1">
    <location>
        <begin position="1"/>
        <end position="255"/>
    </location>
</feature>
<feature type="chain" id="PRO_1000147616" description="Phosphatidylserine decarboxylase alpha chain" evidence="1">
    <location>
        <begin position="256"/>
        <end position="300"/>
    </location>
</feature>
<feature type="active site" description="Charge relay system; for autoendoproteolytic cleavage activity" evidence="1">
    <location>
        <position position="113"/>
    </location>
</feature>
<feature type="active site" description="Charge relay system; for autoendoproteolytic cleavage activity" evidence="1">
    <location>
        <position position="169"/>
    </location>
</feature>
<feature type="active site" description="Charge relay system; for autoendoproteolytic cleavage activity" evidence="1">
    <location>
        <position position="256"/>
    </location>
</feature>
<feature type="active site" description="Schiff-base intermediate with substrate; via pyruvic acid; for decarboxylase activity" evidence="1">
    <location>
        <position position="256"/>
    </location>
</feature>
<feature type="site" description="Cleavage (non-hydrolytic); by autocatalysis" evidence="1">
    <location>
        <begin position="255"/>
        <end position="256"/>
    </location>
</feature>
<feature type="modified residue" description="Pyruvic acid (Ser); by autocatalysis" evidence="1">
    <location>
        <position position="256"/>
    </location>
</feature>
<reference key="1">
    <citation type="submission" date="2009-01" db="EMBL/GenBank/DDBJ databases">
        <title>Complete sequence of Clostridium cellulolyticum H10.</title>
        <authorList>
            <consortium name="US DOE Joint Genome Institute"/>
            <person name="Lucas S."/>
            <person name="Copeland A."/>
            <person name="Lapidus A."/>
            <person name="Glavina del Rio T."/>
            <person name="Dalin E."/>
            <person name="Tice H."/>
            <person name="Bruce D."/>
            <person name="Goodwin L."/>
            <person name="Pitluck S."/>
            <person name="Chertkov O."/>
            <person name="Saunders E."/>
            <person name="Brettin T."/>
            <person name="Detter J.C."/>
            <person name="Han C."/>
            <person name="Larimer F."/>
            <person name="Land M."/>
            <person name="Hauser L."/>
            <person name="Kyrpides N."/>
            <person name="Ivanova N."/>
            <person name="Zhou J."/>
            <person name="Richardson P."/>
        </authorList>
    </citation>
    <scope>NUCLEOTIDE SEQUENCE [LARGE SCALE GENOMIC DNA]</scope>
    <source>
        <strain>ATCC 35319 / DSM 5812 / JCM 6584 / H10</strain>
    </source>
</reference>
<accession>B8I6U9</accession>
<name>PSD_RUMCH</name>
<sequence>MIQIYNRKTKQYDIEQVAGGRLLNTLYTTGRGRLGLKLLVKRKIYSSLTGFFCDSKISRKTIKGFAEKFSIDTNECESKVEEFKSFNEFFARKLKPSARVFDTSEEKLLSPGDGRLQAWENIDTEKLLQIKGMTYSLSELLQDEKLAREYSGGTYLILRLCPVDYHRFHFFDSGKCMETRKIKGEYYSVNPVALSKIPELFCRNKREYSIFKTDNFGDVLFIEVGATSVGSIIQTYIPGERISKGAEKGFFKFGGSTILLIFKKNMVKIDDDIIMQTKEGFETKVLAGEAIGNCIDKRTK</sequence>
<proteinExistence type="inferred from homology"/>
<dbReference type="EC" id="4.1.1.65" evidence="1"/>
<dbReference type="EMBL" id="CP001348">
    <property type="protein sequence ID" value="ACL76941.1"/>
    <property type="molecule type" value="Genomic_DNA"/>
</dbReference>
<dbReference type="RefSeq" id="WP_015926028.1">
    <property type="nucleotide sequence ID" value="NC_011898.1"/>
</dbReference>
<dbReference type="SMR" id="B8I6U9"/>
<dbReference type="STRING" id="394503.Ccel_2613"/>
<dbReference type="KEGG" id="cce:Ccel_2613"/>
<dbReference type="eggNOG" id="COG0688">
    <property type="taxonomic scope" value="Bacteria"/>
</dbReference>
<dbReference type="HOGENOM" id="CLU_029061_2_2_9"/>
<dbReference type="OrthoDB" id="9802030at2"/>
<dbReference type="UniPathway" id="UPA00558">
    <property type="reaction ID" value="UER00616"/>
</dbReference>
<dbReference type="Proteomes" id="UP000001349">
    <property type="component" value="Chromosome"/>
</dbReference>
<dbReference type="GO" id="GO:0005886">
    <property type="term" value="C:plasma membrane"/>
    <property type="evidence" value="ECO:0007669"/>
    <property type="project" value="UniProtKB-SubCell"/>
</dbReference>
<dbReference type="GO" id="GO:0004609">
    <property type="term" value="F:phosphatidylserine decarboxylase activity"/>
    <property type="evidence" value="ECO:0007669"/>
    <property type="project" value="UniProtKB-UniRule"/>
</dbReference>
<dbReference type="GO" id="GO:0006646">
    <property type="term" value="P:phosphatidylethanolamine biosynthetic process"/>
    <property type="evidence" value="ECO:0007669"/>
    <property type="project" value="UniProtKB-UniRule"/>
</dbReference>
<dbReference type="HAMAP" id="MF_00663">
    <property type="entry name" value="PS_decarb_PSD_B_type2"/>
    <property type="match status" value="1"/>
</dbReference>
<dbReference type="InterPro" id="IPR003817">
    <property type="entry name" value="PS_Dcarbxylase"/>
</dbReference>
<dbReference type="InterPro" id="IPR033177">
    <property type="entry name" value="PSD-B"/>
</dbReference>
<dbReference type="InterPro" id="IPR033179">
    <property type="entry name" value="PSD_type2_pro"/>
</dbReference>
<dbReference type="NCBIfam" id="NF001941">
    <property type="entry name" value="PRK00723.1"/>
    <property type="match status" value="1"/>
</dbReference>
<dbReference type="NCBIfam" id="TIGR00163">
    <property type="entry name" value="PS_decarb"/>
    <property type="match status" value="1"/>
</dbReference>
<dbReference type="PANTHER" id="PTHR10067">
    <property type="entry name" value="PHOSPHATIDYLSERINE DECARBOXYLASE"/>
    <property type="match status" value="1"/>
</dbReference>
<dbReference type="PANTHER" id="PTHR10067:SF17">
    <property type="entry name" value="PHOSPHATIDYLSERINE DECARBOXYLASE PROENZYME 2"/>
    <property type="match status" value="1"/>
</dbReference>
<dbReference type="Pfam" id="PF02666">
    <property type="entry name" value="PS_Dcarbxylase"/>
    <property type="match status" value="1"/>
</dbReference>
<evidence type="ECO:0000255" key="1">
    <source>
        <dbReference type="HAMAP-Rule" id="MF_00663"/>
    </source>
</evidence>
<gene>
    <name evidence="1" type="primary">psd</name>
    <name type="ordered locus">Ccel_2613</name>
</gene>
<comment type="function">
    <text evidence="1">Catalyzes the formation of phosphatidylethanolamine (PtdEtn) from phosphatidylserine (PtdSer).</text>
</comment>
<comment type="catalytic activity">
    <reaction evidence="1">
        <text>a 1,2-diacyl-sn-glycero-3-phospho-L-serine + H(+) = a 1,2-diacyl-sn-glycero-3-phosphoethanolamine + CO2</text>
        <dbReference type="Rhea" id="RHEA:20828"/>
        <dbReference type="ChEBI" id="CHEBI:15378"/>
        <dbReference type="ChEBI" id="CHEBI:16526"/>
        <dbReference type="ChEBI" id="CHEBI:57262"/>
        <dbReference type="ChEBI" id="CHEBI:64612"/>
        <dbReference type="EC" id="4.1.1.65"/>
    </reaction>
</comment>
<comment type="cofactor">
    <cofactor evidence="1">
        <name>pyruvate</name>
        <dbReference type="ChEBI" id="CHEBI:15361"/>
    </cofactor>
    <text evidence="1">Binds 1 pyruvoyl group covalently per subunit.</text>
</comment>
<comment type="pathway">
    <text evidence="1">Phospholipid metabolism; phosphatidylethanolamine biosynthesis; phosphatidylethanolamine from CDP-diacylglycerol: step 2/2.</text>
</comment>
<comment type="subunit">
    <text evidence="1">Heterodimer of a large membrane-associated beta subunit and a small pyruvoyl-containing alpha subunit.</text>
</comment>
<comment type="subcellular location">
    <subcellularLocation>
        <location evidence="1">Cell membrane</location>
        <topology evidence="1">Peripheral membrane protein</topology>
    </subcellularLocation>
</comment>
<comment type="PTM">
    <text evidence="1">Is synthesized initially as an inactive proenzyme. Formation of the active enzyme involves a self-maturation process in which the active site pyruvoyl group is generated from an internal serine residue via an autocatalytic post-translational modification. Two non-identical subunits are generated from the proenzyme in this reaction, and the pyruvate is formed at the N-terminus of the alpha chain, which is derived from the carboxyl end of the proenzyme. The autoendoproteolytic cleavage occurs by a canonical serine protease mechanism, in which the side chain hydroxyl group of the serine supplies its oxygen atom to form the C-terminus of the beta chain, while the remainder of the serine residue undergoes an oxidative deamination to produce ammonia and the pyruvoyl prosthetic group on the alpha chain. During this reaction, the Ser that is part of the protease active site of the proenzyme becomes the pyruvoyl prosthetic group, which constitutes an essential element of the active site of the mature decarboxylase.</text>
</comment>
<comment type="similarity">
    <text evidence="1">Belongs to the phosphatidylserine decarboxylase family. PSD-B subfamily. Prokaryotic type II sub-subfamily.</text>
</comment>
<keyword id="KW-1003">Cell membrane</keyword>
<keyword id="KW-0210">Decarboxylase</keyword>
<keyword id="KW-0444">Lipid biosynthesis</keyword>
<keyword id="KW-0443">Lipid metabolism</keyword>
<keyword id="KW-0456">Lyase</keyword>
<keyword id="KW-0472">Membrane</keyword>
<keyword id="KW-0594">Phospholipid biosynthesis</keyword>
<keyword id="KW-1208">Phospholipid metabolism</keyword>
<keyword id="KW-0670">Pyruvate</keyword>
<keyword id="KW-1185">Reference proteome</keyword>
<keyword id="KW-0865">Zymogen</keyword>
<protein>
    <recommendedName>
        <fullName evidence="1">Phosphatidylserine decarboxylase proenzyme</fullName>
        <ecNumber evidence="1">4.1.1.65</ecNumber>
    </recommendedName>
    <component>
        <recommendedName>
            <fullName evidence="1">Phosphatidylserine decarboxylase alpha chain</fullName>
        </recommendedName>
    </component>
    <component>
        <recommendedName>
            <fullName evidence="1">Phosphatidylserine decarboxylase beta chain</fullName>
        </recommendedName>
    </component>
</protein>